<comment type="function">
    <text evidence="1">The glycine cleavage system catalyzes the degradation of glycine. The P protein binds the alpha-amino group of glycine through its pyridoxal phosphate cofactor; CO(2) is released and the remaining methylamine moiety is then transferred to the lipoamide cofactor of the H protein.</text>
</comment>
<comment type="catalytic activity">
    <reaction evidence="1">
        <text>N(6)-[(R)-lipoyl]-L-lysyl-[glycine-cleavage complex H protein] + glycine + H(+) = N(6)-[(R)-S(8)-aminomethyldihydrolipoyl]-L-lysyl-[glycine-cleavage complex H protein] + CO2</text>
        <dbReference type="Rhea" id="RHEA:24304"/>
        <dbReference type="Rhea" id="RHEA-COMP:10494"/>
        <dbReference type="Rhea" id="RHEA-COMP:10495"/>
        <dbReference type="ChEBI" id="CHEBI:15378"/>
        <dbReference type="ChEBI" id="CHEBI:16526"/>
        <dbReference type="ChEBI" id="CHEBI:57305"/>
        <dbReference type="ChEBI" id="CHEBI:83099"/>
        <dbReference type="ChEBI" id="CHEBI:83143"/>
        <dbReference type="EC" id="1.4.4.2"/>
    </reaction>
</comment>
<comment type="cofactor">
    <cofactor evidence="1">
        <name>pyridoxal 5'-phosphate</name>
        <dbReference type="ChEBI" id="CHEBI:597326"/>
    </cofactor>
</comment>
<comment type="subunit">
    <text evidence="1">The glycine cleavage system is composed of four proteins: P, T, L and H.</text>
</comment>
<comment type="similarity">
    <text evidence="1">Belongs to the GcvP family.</text>
</comment>
<reference key="1">
    <citation type="journal article" date="2005" name="Genome Res.">
        <title>Coping with cold: the genome of the versatile marine Antarctica bacterium Pseudoalteromonas haloplanktis TAC125.</title>
        <authorList>
            <person name="Medigue C."/>
            <person name="Krin E."/>
            <person name="Pascal G."/>
            <person name="Barbe V."/>
            <person name="Bernsel A."/>
            <person name="Bertin P.N."/>
            <person name="Cheung F."/>
            <person name="Cruveiller S."/>
            <person name="D'Amico S."/>
            <person name="Duilio A."/>
            <person name="Fang G."/>
            <person name="Feller G."/>
            <person name="Ho C."/>
            <person name="Mangenot S."/>
            <person name="Marino G."/>
            <person name="Nilsson J."/>
            <person name="Parrilli E."/>
            <person name="Rocha E.P.C."/>
            <person name="Rouy Z."/>
            <person name="Sekowska A."/>
            <person name="Tutino M.L."/>
            <person name="Vallenet D."/>
            <person name="von Heijne G."/>
            <person name="Danchin A."/>
        </authorList>
    </citation>
    <scope>NUCLEOTIDE SEQUENCE [LARGE SCALE GENOMIC DNA]</scope>
    <source>
        <strain>TAC 125</strain>
    </source>
</reference>
<dbReference type="EC" id="1.4.4.2" evidence="1"/>
<dbReference type="EMBL" id="CR954246">
    <property type="protein sequence ID" value="CAI87521.1"/>
    <property type="molecule type" value="Genomic_DNA"/>
</dbReference>
<dbReference type="SMR" id="Q3IFW1"/>
<dbReference type="STRING" id="326442.PSHAa2473"/>
<dbReference type="KEGG" id="pha:PSHAa2473"/>
<dbReference type="PATRIC" id="fig|326442.8.peg.2383"/>
<dbReference type="eggNOG" id="COG0403">
    <property type="taxonomic scope" value="Bacteria"/>
</dbReference>
<dbReference type="eggNOG" id="COG1003">
    <property type="taxonomic scope" value="Bacteria"/>
</dbReference>
<dbReference type="HOGENOM" id="CLU_004620_3_2_6"/>
<dbReference type="BioCyc" id="PHAL326442:PSHA_RS12175-MONOMER"/>
<dbReference type="Proteomes" id="UP000006843">
    <property type="component" value="Chromosome I"/>
</dbReference>
<dbReference type="GO" id="GO:0005829">
    <property type="term" value="C:cytosol"/>
    <property type="evidence" value="ECO:0007669"/>
    <property type="project" value="TreeGrafter"/>
</dbReference>
<dbReference type="GO" id="GO:0005960">
    <property type="term" value="C:glycine cleavage complex"/>
    <property type="evidence" value="ECO:0007669"/>
    <property type="project" value="TreeGrafter"/>
</dbReference>
<dbReference type="GO" id="GO:0016594">
    <property type="term" value="F:glycine binding"/>
    <property type="evidence" value="ECO:0007669"/>
    <property type="project" value="TreeGrafter"/>
</dbReference>
<dbReference type="GO" id="GO:0004375">
    <property type="term" value="F:glycine dehydrogenase (decarboxylating) activity"/>
    <property type="evidence" value="ECO:0007669"/>
    <property type="project" value="UniProtKB-EC"/>
</dbReference>
<dbReference type="GO" id="GO:0030170">
    <property type="term" value="F:pyridoxal phosphate binding"/>
    <property type="evidence" value="ECO:0007669"/>
    <property type="project" value="TreeGrafter"/>
</dbReference>
<dbReference type="GO" id="GO:0019464">
    <property type="term" value="P:glycine decarboxylation via glycine cleavage system"/>
    <property type="evidence" value="ECO:0007669"/>
    <property type="project" value="UniProtKB-UniRule"/>
</dbReference>
<dbReference type="CDD" id="cd00613">
    <property type="entry name" value="GDC-P"/>
    <property type="match status" value="2"/>
</dbReference>
<dbReference type="FunFam" id="3.40.640.10:FF:000005">
    <property type="entry name" value="Glycine dehydrogenase (decarboxylating), mitochondrial"/>
    <property type="match status" value="1"/>
</dbReference>
<dbReference type="FunFam" id="3.90.1150.10:FF:000007">
    <property type="entry name" value="Glycine dehydrogenase (decarboxylating), mitochondrial"/>
    <property type="match status" value="1"/>
</dbReference>
<dbReference type="FunFam" id="3.40.640.10:FF:000007">
    <property type="entry name" value="glycine dehydrogenase (Decarboxylating), mitochondrial"/>
    <property type="match status" value="1"/>
</dbReference>
<dbReference type="Gene3D" id="3.90.1150.10">
    <property type="entry name" value="Aspartate Aminotransferase, domain 1"/>
    <property type="match status" value="2"/>
</dbReference>
<dbReference type="Gene3D" id="3.40.640.10">
    <property type="entry name" value="Type I PLP-dependent aspartate aminotransferase-like (Major domain)"/>
    <property type="match status" value="2"/>
</dbReference>
<dbReference type="HAMAP" id="MF_00711">
    <property type="entry name" value="GcvP"/>
    <property type="match status" value="1"/>
</dbReference>
<dbReference type="InterPro" id="IPR018247">
    <property type="entry name" value="EF_Hand_1_Ca_BS"/>
</dbReference>
<dbReference type="InterPro" id="IPR003437">
    <property type="entry name" value="GcvP"/>
</dbReference>
<dbReference type="InterPro" id="IPR049316">
    <property type="entry name" value="GDC-P_C"/>
</dbReference>
<dbReference type="InterPro" id="IPR049315">
    <property type="entry name" value="GDC-P_N"/>
</dbReference>
<dbReference type="InterPro" id="IPR020581">
    <property type="entry name" value="GDC_P"/>
</dbReference>
<dbReference type="InterPro" id="IPR015424">
    <property type="entry name" value="PyrdxlP-dep_Trfase"/>
</dbReference>
<dbReference type="InterPro" id="IPR015421">
    <property type="entry name" value="PyrdxlP-dep_Trfase_major"/>
</dbReference>
<dbReference type="InterPro" id="IPR015422">
    <property type="entry name" value="PyrdxlP-dep_Trfase_small"/>
</dbReference>
<dbReference type="NCBIfam" id="TIGR00461">
    <property type="entry name" value="gcvP"/>
    <property type="match status" value="1"/>
</dbReference>
<dbReference type="NCBIfam" id="NF003346">
    <property type="entry name" value="PRK04366.1"/>
    <property type="match status" value="1"/>
</dbReference>
<dbReference type="PANTHER" id="PTHR11773:SF13">
    <property type="entry name" value="GLYCINE DEHYDROGENASE (DECARBOXYLATING)"/>
    <property type="match status" value="1"/>
</dbReference>
<dbReference type="PANTHER" id="PTHR11773">
    <property type="entry name" value="GLYCINE DEHYDROGENASE, DECARBOXYLATING"/>
    <property type="match status" value="1"/>
</dbReference>
<dbReference type="Pfam" id="PF21478">
    <property type="entry name" value="GcvP2_C"/>
    <property type="match status" value="1"/>
</dbReference>
<dbReference type="Pfam" id="PF02347">
    <property type="entry name" value="GDC-P"/>
    <property type="match status" value="2"/>
</dbReference>
<dbReference type="SUPFAM" id="SSF53383">
    <property type="entry name" value="PLP-dependent transferases"/>
    <property type="match status" value="2"/>
</dbReference>
<feature type="chain" id="PRO_0000227115" description="Glycine dehydrogenase (decarboxylating)">
    <location>
        <begin position="1"/>
        <end position="963"/>
    </location>
</feature>
<feature type="modified residue" description="N6-(pyridoxal phosphate)lysine" evidence="1">
    <location>
        <position position="710"/>
    </location>
</feature>
<sequence length="963" mass="104691">MSNAKSLEQLEQTQDFIRRHIGPSPAQVSDMLSALEVSSVEELIGQTVPAGIRLEQPLTVGESRTEVETLSYLKSVASKNKVFKSYIGQGYHPTHVPHVILRNVLENPGWYTAYTPYQPEIAQGRLESLLNFQTMTLDLTGLDLASASLLDESTAAAEAMGLAKRVSKAKKANAFFIADDVHTQTIDVVSTRAEQFGFEIIVGKAADAVNHEIFGALFQYPSTTGEVVDITDLIAGVQSKKAIACVAADIMSLLLLKAPGKLGADVVLGSAQRFGVPMGYGGPHAAFFATRDAYKRSLPGRIIGVSKDRLGNDALRMAMQTREQHIRRDKANSNICTAQVLLANMAAFYAVYHGPQGLKTIAQRIHRFADILAAGLQAKGVSLKHNTWFDTLTVVSDSKADVIARALASGVNFATNRDGEYSIALSETTTRADVAQLFDIVLGEGHGLSVDAIAADIENNGSTSIPASLERDDEVLTHPNFNSYHSETEMLRYIKRLENKDLALNHSMISLGSCTMKLNATAEMIPITWPEFSNLHPFCPLDQAQGYQIMMGELHDWLVNITGYDAVSLQPNSGAQGEYAGLIAIRKYHESRGDAHRNVCLIPSSAHGTNPASAQMASMKIVVVDCDKNGNVDMADLKAKAEAVAENLSCIMITYPSTHGVYEETIREICDVIHQHGGQVYMDGANMNAQVGVTSPGFIGSDVSHLNLHKTFCIPHGGGGPGVGPIGVKSHLAPFMPNHSIINVPGTNEGNGAVSAAPYGSASILPISWAYITMMGSEGLKQATEMAIVNANYLTHELSKHFPILYRGRNNRVAHECIVDLRPLKELSGITEMDVAKRLQDYGFHSPTMSFPVAGTLMIEPTESESKVEIDRFIEAMVSIKSEIDKVISGEWSIENNPLVFAPHTQGDVLGNEWDRAYDRFYAAFPVPSVAKNKFWPTVTRIDDVYGDRNLVCACPPVETYRD</sequence>
<organism>
    <name type="scientific">Pseudoalteromonas translucida (strain TAC 125)</name>
    <dbReference type="NCBI Taxonomy" id="326442"/>
    <lineage>
        <taxon>Bacteria</taxon>
        <taxon>Pseudomonadati</taxon>
        <taxon>Pseudomonadota</taxon>
        <taxon>Gammaproteobacteria</taxon>
        <taxon>Alteromonadales</taxon>
        <taxon>Pseudoalteromonadaceae</taxon>
        <taxon>Pseudoalteromonas</taxon>
    </lineage>
</organism>
<proteinExistence type="inferred from homology"/>
<gene>
    <name evidence="1" type="primary">gcvP</name>
    <name type="ordered locus">PSHAa2473</name>
</gene>
<evidence type="ECO:0000255" key="1">
    <source>
        <dbReference type="HAMAP-Rule" id="MF_00711"/>
    </source>
</evidence>
<name>GCSP_PSET1</name>
<protein>
    <recommendedName>
        <fullName evidence="1">Glycine dehydrogenase (decarboxylating)</fullName>
        <ecNumber evidence="1">1.4.4.2</ecNumber>
    </recommendedName>
    <alternativeName>
        <fullName evidence="1">Glycine cleavage system P-protein</fullName>
    </alternativeName>
    <alternativeName>
        <fullName evidence="1">Glycine decarboxylase</fullName>
    </alternativeName>
    <alternativeName>
        <fullName evidence="1">Glycine dehydrogenase (aminomethyl-transferring)</fullName>
    </alternativeName>
</protein>
<keyword id="KW-0560">Oxidoreductase</keyword>
<keyword id="KW-0663">Pyridoxal phosphate</keyword>
<keyword id="KW-1185">Reference proteome</keyword>
<accession>Q3IFW1</accession>